<organism>
    <name type="scientific">Sulfolobus islandicus rod-shaped virus 1</name>
    <name type="common">SIRV-1</name>
    <name type="synonym">Sulfolobus virus SIRV-1</name>
    <dbReference type="NCBI Taxonomy" id="157898"/>
    <lineage>
        <taxon>Viruses</taxon>
        <taxon>Adnaviria</taxon>
        <taxon>Zilligvirae</taxon>
        <taxon>Taleaviricota</taxon>
        <taxon>Tokiviricetes</taxon>
        <taxon>Ligamenvirales</taxon>
        <taxon>Rudiviridae</taxon>
        <taxon>Icerudivirus</taxon>
        <taxon>Icerudivirus SIRV1</taxon>
    </lineage>
</organism>
<feature type="chain" id="PRO_0000342298" description="Uncharacterized protein 95">
    <location>
        <begin position="1"/>
        <end position="95"/>
    </location>
</feature>
<feature type="sequence variant" description="In strain: Isolate variant XX.">
    <original>M</original>
    <variation>MKQE</variation>
    <location>
        <position position="1"/>
    </location>
</feature>
<name>Y95_SIRV1</name>
<dbReference type="EMBL" id="AJ414696">
    <property type="protein sequence ID" value="CAC93993.1"/>
    <property type="molecule type" value="Genomic_DNA"/>
</dbReference>
<dbReference type="EMBL" id="AJ748296">
    <property type="protein sequence ID" value="CAG38857.1"/>
    <property type="molecule type" value="Genomic_DNA"/>
</dbReference>
<dbReference type="RefSeq" id="NP_666626.1">
    <property type="nucleotide sequence ID" value="NC_004087.1"/>
</dbReference>
<dbReference type="SMR" id="Q8QL18"/>
<dbReference type="KEGG" id="vg:951382"/>
<dbReference type="OrthoDB" id="21563at10239"/>
<dbReference type="Proteomes" id="UP000002270">
    <property type="component" value="Genome"/>
</dbReference>
<dbReference type="Proteomes" id="UP000223181">
    <property type="component" value="Segment"/>
</dbReference>
<dbReference type="CDD" id="cd22267">
    <property type="entry name" value="AcrID1"/>
    <property type="match status" value="1"/>
</dbReference>
<dbReference type="Gene3D" id="3.30.160.300">
    <property type="match status" value="1"/>
</dbReference>
<dbReference type="InterPro" id="IPR009804">
    <property type="entry name" value="SIFV_Orf14"/>
</dbReference>
<dbReference type="NCBIfam" id="NF033952">
    <property type="entry name" value="AcrID1_fam"/>
    <property type="match status" value="1"/>
</dbReference>
<dbReference type="Pfam" id="PF07118">
    <property type="entry name" value="DUF1374"/>
    <property type="match status" value="1"/>
</dbReference>
<sequence>MNLKKVKRIIDMFFKEKNLNELTLAFKRPLIVSENEYNELVGRPNLSFVDKDPWVLSDEFVYYELSNTLVKLIIYYFKEKGFIHILEIDLFREKR</sequence>
<gene>
    <name type="ORF">95</name>
</gene>
<accession>Q8QL18</accession>
<accession>Q5TJ81</accession>
<organismHost>
    <name type="scientific">Saccharolobus islandicus</name>
    <name type="common">Sulfolobus islandicus</name>
    <dbReference type="NCBI Taxonomy" id="43080"/>
</organismHost>
<reference key="1">
    <citation type="journal article" date="2001" name="Virology">
        <title>Sequences and replication of genomes of the archaeal rudiviruses SIRV1 and SIRV2: relationships to the archaeal lipothrixvirus SIFV and some eukaryal viruses.</title>
        <authorList>
            <person name="Peng X."/>
            <person name="Blum H."/>
            <person name="She Q."/>
            <person name="Mallok S."/>
            <person name="Bruegger K."/>
            <person name="Garrett R.A."/>
            <person name="Zillig W."/>
            <person name="Prangishvili D."/>
        </authorList>
    </citation>
    <scope>NUCLEOTIDE SEQUENCE [LARGE SCALE GENOMIC DNA]</scope>
    <source>
        <strain>Isolate variant VIII</strain>
    </source>
</reference>
<reference key="2">
    <citation type="journal article" date="2004" name="Mol. Microbiol.">
        <title>Multiple variants of the archaeal DNA rudivirus SIRV1 in a single host and a novel mechanism of genomic variation.</title>
        <authorList>
            <person name="Peng X."/>
            <person name="Kessler A."/>
            <person name="Phan H."/>
            <person name="Garrett R.A."/>
            <person name="Prangishvili D."/>
        </authorList>
    </citation>
    <scope>NUCLEOTIDE SEQUENCE [LARGE SCALE GENOMIC DNA]</scope>
    <source>
        <strain>Isolate variant XX</strain>
    </source>
</reference>
<proteinExistence type="predicted"/>
<keyword id="KW-1185">Reference proteome</keyword>
<protein>
    <recommendedName>
        <fullName>Uncharacterized protein 95</fullName>
    </recommendedName>
</protein>